<name>RPB4_SCHPO</name>
<feature type="chain" id="PRO_0000073983" description="DNA-directed RNA polymerase II subunit rpb4">
    <location>
        <begin position="1"/>
        <end position="135"/>
    </location>
</feature>
<keyword id="KW-0002">3D-structure</keyword>
<keyword id="KW-0240">DNA-directed RNA polymerase</keyword>
<keyword id="KW-0539">Nucleus</keyword>
<keyword id="KW-1185">Reference proteome</keyword>
<keyword id="KW-0804">Transcription</keyword>
<protein>
    <recommendedName>
        <fullName>DNA-directed RNA polymerase II subunit rpb4</fullName>
        <shortName>RNA polymerase II subunit B4</shortName>
    </recommendedName>
</protein>
<reference key="1">
    <citation type="journal article" date="1999" name="Mol. Cell. Biol.">
        <title>The Rpb4 subunit of fission yeast Schizosaccharomyces pombe RNA polymerase II is essential for cell viability and similar in structure to the corresponding subunits of higher eukaryotes.</title>
        <authorList>
            <person name="Sakurai H."/>
            <person name="Mitsuzawa H."/>
            <person name="Kimura M."/>
            <person name="Ishihama A."/>
        </authorList>
    </citation>
    <scope>NUCLEOTIDE SEQUENCE [GENOMIC DNA]</scope>
    <source>
        <strain>JY741</strain>
    </source>
</reference>
<reference key="2">
    <citation type="journal article" date="1999" name="Bioorg. Khim.">
        <title>RNA polymerase II from Schizosaccharomyces pombe contains 12 different subunits: identification and characterization of subunit Rpb4.</title>
        <authorList>
            <person name="Shpakovski G.V."/>
            <person name="Baranova G.M."/>
        </authorList>
    </citation>
    <scope>NUCLEOTIDE SEQUENCE [MRNA]</scope>
    <source>
        <strain>972 / ATCC 24843</strain>
    </source>
</reference>
<reference key="3">
    <citation type="journal article" date="2002" name="Nature">
        <title>The genome sequence of Schizosaccharomyces pombe.</title>
        <authorList>
            <person name="Wood V."/>
            <person name="Gwilliam R."/>
            <person name="Rajandream M.A."/>
            <person name="Lyne M.H."/>
            <person name="Lyne R."/>
            <person name="Stewart A."/>
            <person name="Sgouros J.G."/>
            <person name="Peat N."/>
            <person name="Hayles J."/>
            <person name="Baker S.G."/>
            <person name="Basham D."/>
            <person name="Bowman S."/>
            <person name="Brooks K."/>
            <person name="Brown D."/>
            <person name="Brown S."/>
            <person name="Chillingworth T."/>
            <person name="Churcher C.M."/>
            <person name="Collins M."/>
            <person name="Connor R."/>
            <person name="Cronin A."/>
            <person name="Davis P."/>
            <person name="Feltwell T."/>
            <person name="Fraser A."/>
            <person name="Gentles S."/>
            <person name="Goble A."/>
            <person name="Hamlin N."/>
            <person name="Harris D.E."/>
            <person name="Hidalgo J."/>
            <person name="Hodgson G."/>
            <person name="Holroyd S."/>
            <person name="Hornsby T."/>
            <person name="Howarth S."/>
            <person name="Huckle E.J."/>
            <person name="Hunt S."/>
            <person name="Jagels K."/>
            <person name="James K.D."/>
            <person name="Jones L."/>
            <person name="Jones M."/>
            <person name="Leather S."/>
            <person name="McDonald S."/>
            <person name="McLean J."/>
            <person name="Mooney P."/>
            <person name="Moule S."/>
            <person name="Mungall K.L."/>
            <person name="Murphy L.D."/>
            <person name="Niblett D."/>
            <person name="Odell C."/>
            <person name="Oliver K."/>
            <person name="O'Neil S."/>
            <person name="Pearson D."/>
            <person name="Quail M.A."/>
            <person name="Rabbinowitsch E."/>
            <person name="Rutherford K.M."/>
            <person name="Rutter S."/>
            <person name="Saunders D."/>
            <person name="Seeger K."/>
            <person name="Sharp S."/>
            <person name="Skelton J."/>
            <person name="Simmonds M.N."/>
            <person name="Squares R."/>
            <person name="Squares S."/>
            <person name="Stevens K."/>
            <person name="Taylor K."/>
            <person name="Taylor R.G."/>
            <person name="Tivey A."/>
            <person name="Walsh S.V."/>
            <person name="Warren T."/>
            <person name="Whitehead S."/>
            <person name="Woodward J.R."/>
            <person name="Volckaert G."/>
            <person name="Aert R."/>
            <person name="Robben J."/>
            <person name="Grymonprez B."/>
            <person name="Weltjens I."/>
            <person name="Vanstreels E."/>
            <person name="Rieger M."/>
            <person name="Schaefer M."/>
            <person name="Mueller-Auer S."/>
            <person name="Gabel C."/>
            <person name="Fuchs M."/>
            <person name="Duesterhoeft A."/>
            <person name="Fritzc C."/>
            <person name="Holzer E."/>
            <person name="Moestl D."/>
            <person name="Hilbert H."/>
            <person name="Borzym K."/>
            <person name="Langer I."/>
            <person name="Beck A."/>
            <person name="Lehrach H."/>
            <person name="Reinhardt R."/>
            <person name="Pohl T.M."/>
            <person name="Eger P."/>
            <person name="Zimmermann W."/>
            <person name="Wedler H."/>
            <person name="Wambutt R."/>
            <person name="Purnelle B."/>
            <person name="Goffeau A."/>
            <person name="Cadieu E."/>
            <person name="Dreano S."/>
            <person name="Gloux S."/>
            <person name="Lelaure V."/>
            <person name="Mottier S."/>
            <person name="Galibert F."/>
            <person name="Aves S.J."/>
            <person name="Xiang Z."/>
            <person name="Hunt C."/>
            <person name="Moore K."/>
            <person name="Hurst S.M."/>
            <person name="Lucas M."/>
            <person name="Rochet M."/>
            <person name="Gaillardin C."/>
            <person name="Tallada V.A."/>
            <person name="Garzon A."/>
            <person name="Thode G."/>
            <person name="Daga R.R."/>
            <person name="Cruzado L."/>
            <person name="Jimenez J."/>
            <person name="Sanchez M."/>
            <person name="del Rey F."/>
            <person name="Benito J."/>
            <person name="Dominguez A."/>
            <person name="Revuelta J.L."/>
            <person name="Moreno S."/>
            <person name="Armstrong J."/>
            <person name="Forsburg S.L."/>
            <person name="Cerutti L."/>
            <person name="Lowe T."/>
            <person name="McCombie W.R."/>
            <person name="Paulsen I."/>
            <person name="Potashkin J."/>
            <person name="Shpakovski G.V."/>
            <person name="Ussery D."/>
            <person name="Barrell B.G."/>
            <person name="Nurse P."/>
        </authorList>
    </citation>
    <scope>NUCLEOTIDE SEQUENCE [LARGE SCALE GENOMIC DNA]</scope>
    <source>
        <strain>972 / ATCC 24843</strain>
    </source>
</reference>
<sequence length="135" mass="15362">MPRAIFEEDAAQLKLGPEFENEDMLTVSEAKILIETVLAQRARETNGEIPMTDVMKKTVAYFNVFARFKTAEATYACERILGNRFHKFERAQLGTLCCEDAEEARTLIPSLANKIDDQNLQGILDELSTLRKFQD</sequence>
<evidence type="ECO:0000250" key="1"/>
<evidence type="ECO:0000305" key="2"/>
<accession>O74825</accession>
<organism>
    <name type="scientific">Schizosaccharomyces pombe (strain 972 / ATCC 24843)</name>
    <name type="common">Fission yeast</name>
    <dbReference type="NCBI Taxonomy" id="284812"/>
    <lineage>
        <taxon>Eukaryota</taxon>
        <taxon>Fungi</taxon>
        <taxon>Dikarya</taxon>
        <taxon>Ascomycota</taxon>
        <taxon>Taphrinomycotina</taxon>
        <taxon>Schizosaccharomycetes</taxon>
        <taxon>Schizosaccharomycetales</taxon>
        <taxon>Schizosaccharomycetaceae</taxon>
        <taxon>Schizosaccharomyces</taxon>
    </lineage>
</organism>
<proteinExistence type="evidence at protein level"/>
<gene>
    <name type="primary">rpb4</name>
    <name type="ORF">SPBC337.14</name>
</gene>
<dbReference type="EMBL" id="AB019575">
    <property type="protein sequence ID" value="BAA85621.1"/>
    <property type="molecule type" value="Genomic_DNA"/>
</dbReference>
<dbReference type="EMBL" id="AF149308">
    <property type="protein sequence ID" value="AAF62856.1"/>
    <property type="molecule type" value="mRNA"/>
</dbReference>
<dbReference type="EMBL" id="CU329671">
    <property type="protein sequence ID" value="CAA21284.1"/>
    <property type="molecule type" value="Genomic_DNA"/>
</dbReference>
<dbReference type="PIR" id="T40267">
    <property type="entry name" value="T40267"/>
</dbReference>
<dbReference type="RefSeq" id="NP_595415.1">
    <property type="nucleotide sequence ID" value="NM_001021322.2"/>
</dbReference>
<dbReference type="PDB" id="3H0G">
    <property type="method" value="X-ray"/>
    <property type="resolution" value="3.65 A"/>
    <property type="chains" value="D/P=1-135"/>
</dbReference>
<dbReference type="PDB" id="5U0S">
    <property type="method" value="EM"/>
    <property type="resolution" value="7.80 A"/>
    <property type="chains" value="d=1-135"/>
</dbReference>
<dbReference type="PDBsum" id="3H0G"/>
<dbReference type="PDBsum" id="5U0S"/>
<dbReference type="EMDB" id="EMD-8480"/>
<dbReference type="SMR" id="O74825"/>
<dbReference type="BioGRID" id="277526">
    <property type="interactions" value="14"/>
</dbReference>
<dbReference type="ComplexPortal" id="CPX-2661">
    <property type="entry name" value="DNA-directed RNA polymerase II complex"/>
</dbReference>
<dbReference type="FunCoup" id="O74825">
    <property type="interactions" value="681"/>
</dbReference>
<dbReference type="IntAct" id="O74825">
    <property type="interactions" value="3"/>
</dbReference>
<dbReference type="MINT" id="O74825"/>
<dbReference type="STRING" id="284812.O74825"/>
<dbReference type="PaxDb" id="4896-SPBC337.14.1"/>
<dbReference type="EnsemblFungi" id="SPBC337.14.1">
    <property type="protein sequence ID" value="SPBC337.14.1:pep"/>
    <property type="gene ID" value="SPBC337.14"/>
</dbReference>
<dbReference type="GeneID" id="2541011"/>
<dbReference type="KEGG" id="spo:2541011"/>
<dbReference type="PomBase" id="SPBC337.14">
    <property type="gene designation" value="rpb4"/>
</dbReference>
<dbReference type="VEuPathDB" id="FungiDB:SPBC337.14"/>
<dbReference type="eggNOG" id="KOG2351">
    <property type="taxonomic scope" value="Eukaryota"/>
</dbReference>
<dbReference type="HOGENOM" id="CLU_110332_2_1_1"/>
<dbReference type="InParanoid" id="O74825"/>
<dbReference type="OMA" id="HRKTQNE"/>
<dbReference type="PhylomeDB" id="O74825"/>
<dbReference type="Reactome" id="R-SPO-113418">
    <property type="pathway name" value="Formation of the Early Elongation Complex"/>
</dbReference>
<dbReference type="Reactome" id="R-SPO-5578749">
    <property type="pathway name" value="Transcriptional regulation by small RNAs"/>
</dbReference>
<dbReference type="Reactome" id="R-SPO-674695">
    <property type="pathway name" value="RNA Polymerase II Pre-transcription Events"/>
</dbReference>
<dbReference type="Reactome" id="R-SPO-6781823">
    <property type="pathway name" value="Formation of TC-NER Pre-Incision Complex"/>
</dbReference>
<dbReference type="Reactome" id="R-SPO-6782135">
    <property type="pathway name" value="Dual incision in TC-NER"/>
</dbReference>
<dbReference type="Reactome" id="R-SPO-6782210">
    <property type="pathway name" value="Gap-filling DNA repair synthesis and ligation in TC-NER"/>
</dbReference>
<dbReference type="Reactome" id="R-SPO-6796648">
    <property type="pathway name" value="TP53 Regulates Transcription of DNA Repair Genes"/>
</dbReference>
<dbReference type="Reactome" id="R-SPO-6807505">
    <property type="pathway name" value="RNA polymerase II transcribes snRNA genes"/>
</dbReference>
<dbReference type="Reactome" id="R-SPO-72086">
    <property type="pathway name" value="mRNA Capping"/>
</dbReference>
<dbReference type="Reactome" id="R-SPO-72163">
    <property type="pathway name" value="mRNA Splicing - Major Pathway"/>
</dbReference>
<dbReference type="Reactome" id="R-SPO-72203">
    <property type="pathway name" value="Processing of Capped Intron-Containing Pre-mRNA"/>
</dbReference>
<dbReference type="Reactome" id="R-SPO-73776">
    <property type="pathway name" value="RNA Polymerase II Promoter Escape"/>
</dbReference>
<dbReference type="Reactome" id="R-SPO-73779">
    <property type="pathway name" value="RNA Polymerase II Transcription Pre-Initiation And Promoter Opening"/>
</dbReference>
<dbReference type="Reactome" id="R-SPO-75953">
    <property type="pathway name" value="RNA Polymerase II Transcription Initiation"/>
</dbReference>
<dbReference type="Reactome" id="R-SPO-76042">
    <property type="pathway name" value="RNA Polymerase II Transcription Initiation And Promoter Clearance"/>
</dbReference>
<dbReference type="Reactome" id="R-SPO-77075">
    <property type="pathway name" value="RNA Pol II CTD phosphorylation and interaction with CE"/>
</dbReference>
<dbReference type="Reactome" id="R-SPO-9018519">
    <property type="pathway name" value="Estrogen-dependent gene expression"/>
</dbReference>
<dbReference type="EvolutionaryTrace" id="O74825"/>
<dbReference type="PRO" id="PR:O74825"/>
<dbReference type="Proteomes" id="UP000002485">
    <property type="component" value="Chromosome II"/>
</dbReference>
<dbReference type="GO" id="GO:0005634">
    <property type="term" value="C:nucleus"/>
    <property type="evidence" value="ECO:0007005"/>
    <property type="project" value="PomBase"/>
</dbReference>
<dbReference type="GO" id="GO:0005665">
    <property type="term" value="C:RNA polymerase II, core complex"/>
    <property type="evidence" value="ECO:0000314"/>
    <property type="project" value="PomBase"/>
</dbReference>
<dbReference type="GO" id="GO:0016591">
    <property type="term" value="C:RNA polymerase II, holoenzyme"/>
    <property type="evidence" value="ECO:0000269"/>
    <property type="project" value="PomBase"/>
</dbReference>
<dbReference type="GO" id="GO:0000166">
    <property type="term" value="F:nucleotide binding"/>
    <property type="evidence" value="ECO:0007669"/>
    <property type="project" value="InterPro"/>
</dbReference>
<dbReference type="GO" id="GO:0031369">
    <property type="term" value="F:translation initiation factor binding"/>
    <property type="evidence" value="ECO:0000318"/>
    <property type="project" value="GO_Central"/>
</dbReference>
<dbReference type="GO" id="GO:0006366">
    <property type="term" value="P:transcription by RNA polymerase II"/>
    <property type="evidence" value="ECO:0000315"/>
    <property type="project" value="PomBase"/>
</dbReference>
<dbReference type="GO" id="GO:0006367">
    <property type="term" value="P:transcription initiation at RNA polymerase II promoter"/>
    <property type="evidence" value="ECO:0000318"/>
    <property type="project" value="GO_Central"/>
</dbReference>
<dbReference type="FunFam" id="1.20.1250.40:FF:000003">
    <property type="entry name" value="DNA-directed RNA polymerase II subunit rpb4"/>
    <property type="match status" value="1"/>
</dbReference>
<dbReference type="Gene3D" id="1.20.1250.40">
    <property type="match status" value="1"/>
</dbReference>
<dbReference type="InterPro" id="IPR010997">
    <property type="entry name" value="HRDC-like_sf"/>
</dbReference>
<dbReference type="InterPro" id="IPR006590">
    <property type="entry name" value="RNA_pol_Rpb4/RPC9_core"/>
</dbReference>
<dbReference type="InterPro" id="IPR045222">
    <property type="entry name" value="Rpb4-like"/>
</dbReference>
<dbReference type="InterPro" id="IPR005574">
    <property type="entry name" value="Rpb4/RPC9"/>
</dbReference>
<dbReference type="InterPro" id="IPR038324">
    <property type="entry name" value="Rpb4/RPC9_sf"/>
</dbReference>
<dbReference type="PANTHER" id="PTHR21297">
    <property type="entry name" value="DNA-DIRECTED RNA POLYMERASE II"/>
    <property type="match status" value="1"/>
</dbReference>
<dbReference type="Pfam" id="PF03874">
    <property type="entry name" value="RNA_pol_Rpb4"/>
    <property type="match status" value="1"/>
</dbReference>
<dbReference type="SMART" id="SM00657">
    <property type="entry name" value="RPOL4c"/>
    <property type="match status" value="1"/>
</dbReference>
<dbReference type="SUPFAM" id="SSF47819">
    <property type="entry name" value="HRDC-like"/>
    <property type="match status" value="1"/>
</dbReference>
<comment type="function">
    <text evidence="1">DNA-dependent RNA polymerase catalyzes the transcription of DNA into RNA using the four ribonucleoside triphosphates as substrates. Component of RNA polymerase II which synthesizes mRNA precursors and many functional non-coding RNAs. Pol II is the central component of the basal RNA polymerase II transcription machinery. It is composed of mobile elements that move relative to each other. RPB4 is part of a subcomplex with RPB7 that binds to a pocket formed by RPB1, RPB2 and RPB6 at the base of the clamp element. The RPB4-RPB7 subcomplex seems to lock the clamp via RPB7 in the closed conformation thus preventing double-stranded DNA to enter the active site cleft. The RPB4-RPB7 subcomplex binds single-stranded DNA and RNA (By similarity).</text>
</comment>
<comment type="subunit">
    <text evidence="1">Component of the RNA polymerase II (Pol II) complex consisting of 12 subunits. RPB4 and RPB7 form a Pol II subcomplex (By similarity).</text>
</comment>
<comment type="interaction">
    <interactant intactId="EBI-697320">
        <id>O74825</id>
    </interactant>
    <interactant intactId="EBI-1533413">
        <id>O94646</id>
        <label>med8</label>
    </interactant>
    <organismsDiffer>false</organismsDiffer>
    <experiments>3</experiments>
</comment>
<comment type="subcellular location">
    <subcellularLocation>
        <location evidence="1">Nucleus</location>
    </subcellularLocation>
</comment>
<comment type="similarity">
    <text evidence="2">Belongs to the eukaryotic RPB4 RNA polymerase subunit family.</text>
</comment>